<sequence length="603" mass="67438">MTMYTTMTTLTLTPLILPILTTLINPNKKNSYPHYVKSIIASTFIISLFPTTMFMCLDQEAIISNWHWATTQTTQLSLSFKLDYFSMTFIPVALFVTWAIMEFSLWYMNSDPNINQFFKYLLIFLITMLILVTANNLFQLFIGWEGVGIMSFLLISWWYARTDANTAAIQAILYNRIGDIGFILALAWFLLHSNSWDPQQMVLLSTNPSLTPLLGFLLAAAGKSAQLGLHPWLPSAMEGPTPVSALLHSSTMVVAGVFLLIRFHPLAENNPLIQTLTLCLGAITTLFAAICALTQNDIKKIVAFSTSSQLGLMMVTIGINQPHLAFLHICTHAFFKAMLFMCSGSIIHNLNNEQDIRKMGGLLKTMPLTSTSLIIGSLALAGMPFLTGFYSKDLIIETANMSYMNAWALSITLIATSLTSAYSTRMILLTLMGQPRFPTLTNINENNPTLLNPIKRLTIGSLFAGFFITNNILPMSTSQMTIPLYLKLTALSVTFLGLLTALDLNYLTNKLKMKSPPYTFYFSNMLGFYPNIMHRSIPYLGLLTSQNLPLLLLDLTWLEKLLPKTISQYQVSASITTSTQKGMIKLYFLSFLFPLILTLLLIM</sequence>
<keyword id="KW-0249">Electron transport</keyword>
<keyword id="KW-0472">Membrane</keyword>
<keyword id="KW-0496">Mitochondrion</keyword>
<keyword id="KW-0999">Mitochondrion inner membrane</keyword>
<keyword id="KW-0520">NAD</keyword>
<keyword id="KW-1185">Reference proteome</keyword>
<keyword id="KW-0679">Respiratory chain</keyword>
<keyword id="KW-1278">Translocase</keyword>
<keyword id="KW-0812">Transmembrane</keyword>
<keyword id="KW-1133">Transmembrane helix</keyword>
<keyword id="KW-0813">Transport</keyword>
<keyword id="KW-0830">Ubiquinone</keyword>
<name>NU5M_PANPA</name>
<comment type="function">
    <text evidence="1">Core subunit of the mitochondrial membrane respiratory chain NADH dehydrogenase (Complex I) which catalyzes electron transfer from NADH through the respiratory chain, using ubiquinone as an electron acceptor. Essential for the catalytic activity and assembly of complex I.</text>
</comment>
<comment type="catalytic activity">
    <reaction evidence="1">
        <text>a ubiquinone + NADH + 5 H(+)(in) = a ubiquinol + NAD(+) + 4 H(+)(out)</text>
        <dbReference type="Rhea" id="RHEA:29091"/>
        <dbReference type="Rhea" id="RHEA-COMP:9565"/>
        <dbReference type="Rhea" id="RHEA-COMP:9566"/>
        <dbReference type="ChEBI" id="CHEBI:15378"/>
        <dbReference type="ChEBI" id="CHEBI:16389"/>
        <dbReference type="ChEBI" id="CHEBI:17976"/>
        <dbReference type="ChEBI" id="CHEBI:57540"/>
        <dbReference type="ChEBI" id="CHEBI:57945"/>
        <dbReference type="EC" id="7.1.1.2"/>
    </reaction>
</comment>
<comment type="subunit">
    <text evidence="2">Core subunit of respiratory chain NADH dehydrogenase (Complex I) which is composed of 45 different subunits.</text>
</comment>
<comment type="subcellular location">
    <subcellularLocation>
        <location evidence="2">Mitochondrion inner membrane</location>
        <topology evidence="3">Multi-pass membrane protein</topology>
    </subcellularLocation>
</comment>
<comment type="similarity">
    <text evidence="4">Belongs to the complex I subunit 5 family.</text>
</comment>
<accession>P03916</accession>
<accession>Q35589</accession>
<gene>
    <name type="primary">MT-ND5</name>
    <name type="synonym">MTND5</name>
    <name type="synonym">NADH5</name>
    <name type="synonym">ND5</name>
</gene>
<evidence type="ECO:0000250" key="1">
    <source>
        <dbReference type="UniProtKB" id="P03915"/>
    </source>
</evidence>
<evidence type="ECO:0000250" key="2">
    <source>
        <dbReference type="UniProtKB" id="P03920"/>
    </source>
</evidence>
<evidence type="ECO:0000255" key="3"/>
<evidence type="ECO:0000305" key="4"/>
<protein>
    <recommendedName>
        <fullName>NADH-ubiquinone oxidoreductase chain 5</fullName>
        <ecNumber evidence="1">7.1.1.2</ecNumber>
    </recommendedName>
    <alternativeName>
        <fullName>NADH dehydrogenase subunit 5</fullName>
    </alternativeName>
</protein>
<dbReference type="EC" id="7.1.1.2" evidence="1"/>
<dbReference type="EMBL" id="D38116">
    <property type="protein sequence ID" value="BAA07315.1"/>
    <property type="molecule type" value="Genomic_DNA"/>
</dbReference>
<dbReference type="EMBL" id="V00672">
    <property type="protein sequence ID" value="CAA24043.1"/>
    <property type="molecule type" value="Genomic_DNA"/>
</dbReference>
<dbReference type="PIR" id="A05226">
    <property type="entry name" value="A05226"/>
</dbReference>
<dbReference type="PIR" id="T14149">
    <property type="entry name" value="T14149"/>
</dbReference>
<dbReference type="RefSeq" id="NP_008209.1">
    <property type="nucleotide sequence ID" value="NC_001644.1"/>
</dbReference>
<dbReference type="SMR" id="P03916"/>
<dbReference type="STRING" id="9597.ENSPPAP00000000011"/>
<dbReference type="Ensembl" id="ENSPPAT00000000032.1">
    <property type="protein sequence ID" value="ENSPPAP00000000011.1"/>
    <property type="gene ID" value="ENSPPAG00000000032.1"/>
</dbReference>
<dbReference type="GeneID" id="807878"/>
<dbReference type="KEGG" id="pps:807878"/>
<dbReference type="CTD" id="4540"/>
<dbReference type="GeneTree" id="ENSGT00730000111303"/>
<dbReference type="OMA" id="GVGIMSF"/>
<dbReference type="Proteomes" id="UP000240080">
    <property type="component" value="Mitochondrion"/>
</dbReference>
<dbReference type="Bgee" id="ENSPPAG00000000032">
    <property type="expression patterns" value="Expressed in adult mammalian kidney and 6 other cell types or tissues"/>
</dbReference>
<dbReference type="GO" id="GO:0005743">
    <property type="term" value="C:mitochondrial inner membrane"/>
    <property type="evidence" value="ECO:0000250"/>
    <property type="project" value="UniProtKB"/>
</dbReference>
<dbReference type="GO" id="GO:0045271">
    <property type="term" value="C:respiratory chain complex I"/>
    <property type="evidence" value="ECO:0007669"/>
    <property type="project" value="Ensembl"/>
</dbReference>
<dbReference type="GO" id="GO:0008137">
    <property type="term" value="F:NADH dehydrogenase (ubiquinone) activity"/>
    <property type="evidence" value="ECO:0000250"/>
    <property type="project" value="UniProtKB"/>
</dbReference>
<dbReference type="GO" id="GO:0015990">
    <property type="term" value="P:electron transport coupled proton transport"/>
    <property type="evidence" value="ECO:0007669"/>
    <property type="project" value="TreeGrafter"/>
</dbReference>
<dbReference type="GO" id="GO:0006120">
    <property type="term" value="P:mitochondrial electron transport, NADH to ubiquinone"/>
    <property type="evidence" value="ECO:0000250"/>
    <property type="project" value="UniProtKB"/>
</dbReference>
<dbReference type="GO" id="GO:0032981">
    <property type="term" value="P:mitochondrial respiratory chain complex I assembly"/>
    <property type="evidence" value="ECO:0000250"/>
    <property type="project" value="UniProtKB"/>
</dbReference>
<dbReference type="InterPro" id="IPR010934">
    <property type="entry name" value="NADH_DH_su5_C"/>
</dbReference>
<dbReference type="InterPro" id="IPR018393">
    <property type="entry name" value="NADHpl_OxRdtase_5_subgr"/>
</dbReference>
<dbReference type="InterPro" id="IPR001750">
    <property type="entry name" value="ND/Mrp_TM"/>
</dbReference>
<dbReference type="InterPro" id="IPR003945">
    <property type="entry name" value="NU5C-like"/>
</dbReference>
<dbReference type="InterPro" id="IPR001516">
    <property type="entry name" value="Proton_antipo_N"/>
</dbReference>
<dbReference type="NCBIfam" id="TIGR01974">
    <property type="entry name" value="NDH_I_L"/>
    <property type="match status" value="1"/>
</dbReference>
<dbReference type="PANTHER" id="PTHR42829">
    <property type="entry name" value="NADH-UBIQUINONE OXIDOREDUCTASE CHAIN 5"/>
    <property type="match status" value="1"/>
</dbReference>
<dbReference type="PANTHER" id="PTHR42829:SF2">
    <property type="entry name" value="NADH-UBIQUINONE OXIDOREDUCTASE CHAIN 5"/>
    <property type="match status" value="1"/>
</dbReference>
<dbReference type="Pfam" id="PF06455">
    <property type="entry name" value="NADH5_C"/>
    <property type="match status" value="1"/>
</dbReference>
<dbReference type="Pfam" id="PF00361">
    <property type="entry name" value="Proton_antipo_M"/>
    <property type="match status" value="1"/>
</dbReference>
<dbReference type="Pfam" id="PF00662">
    <property type="entry name" value="Proton_antipo_N"/>
    <property type="match status" value="1"/>
</dbReference>
<dbReference type="PRINTS" id="PR01434">
    <property type="entry name" value="NADHDHGNASE5"/>
</dbReference>
<organism>
    <name type="scientific">Pan paniscus</name>
    <name type="common">Pygmy chimpanzee</name>
    <name type="synonym">Bonobo</name>
    <dbReference type="NCBI Taxonomy" id="9597"/>
    <lineage>
        <taxon>Eukaryota</taxon>
        <taxon>Metazoa</taxon>
        <taxon>Chordata</taxon>
        <taxon>Craniata</taxon>
        <taxon>Vertebrata</taxon>
        <taxon>Euteleostomi</taxon>
        <taxon>Mammalia</taxon>
        <taxon>Eutheria</taxon>
        <taxon>Euarchontoglires</taxon>
        <taxon>Primates</taxon>
        <taxon>Haplorrhini</taxon>
        <taxon>Catarrhini</taxon>
        <taxon>Hominidae</taxon>
        <taxon>Pan</taxon>
    </lineage>
</organism>
<feature type="chain" id="PRO_0000118122" description="NADH-ubiquinone oxidoreductase chain 5">
    <location>
        <begin position="1"/>
        <end position="603"/>
    </location>
</feature>
<feature type="transmembrane region" description="Helical" evidence="3">
    <location>
        <begin position="4"/>
        <end position="24"/>
    </location>
</feature>
<feature type="transmembrane region" description="Helical" evidence="3">
    <location>
        <begin position="38"/>
        <end position="58"/>
    </location>
</feature>
<feature type="transmembrane region" description="Helical" evidence="3">
    <location>
        <begin position="87"/>
        <end position="107"/>
    </location>
</feature>
<feature type="transmembrane region" description="Helical" evidence="3">
    <location>
        <begin position="122"/>
        <end position="142"/>
    </location>
</feature>
<feature type="transmembrane region" description="Helical" evidence="3">
    <location>
        <begin position="144"/>
        <end position="160"/>
    </location>
</feature>
<feature type="transmembrane region" description="Helical" evidence="3">
    <location>
        <begin position="171"/>
        <end position="191"/>
    </location>
</feature>
<feature type="transmembrane region" description="Helical" evidence="3">
    <location>
        <begin position="211"/>
        <end position="233"/>
    </location>
</feature>
<feature type="transmembrane region" description="Helical" evidence="3">
    <location>
        <begin position="241"/>
        <end position="261"/>
    </location>
</feature>
<feature type="transmembrane region" description="Helical" evidence="3">
    <location>
        <begin position="272"/>
        <end position="292"/>
    </location>
</feature>
<feature type="transmembrane region" description="Helical" evidence="3">
    <location>
        <begin position="301"/>
        <end position="320"/>
    </location>
</feature>
<feature type="transmembrane region" description="Helical" evidence="3">
    <location>
        <begin position="325"/>
        <end position="347"/>
    </location>
</feature>
<feature type="transmembrane region" description="Helical" evidence="3">
    <location>
        <begin position="370"/>
        <end position="390"/>
    </location>
</feature>
<feature type="transmembrane region" description="Helical" evidence="3">
    <location>
        <begin position="407"/>
        <end position="429"/>
    </location>
</feature>
<feature type="transmembrane region" description="Helical" evidence="3">
    <location>
        <begin position="457"/>
        <end position="477"/>
    </location>
</feature>
<feature type="transmembrane region" description="Helical" evidence="3">
    <location>
        <begin position="482"/>
        <end position="502"/>
    </location>
</feature>
<feature type="transmembrane region" description="Helical" evidence="3">
    <location>
        <begin position="583"/>
        <end position="603"/>
    </location>
</feature>
<geneLocation type="mitochondrion"/>
<reference key="1">
    <citation type="journal article" date="1995" name="Proc. Natl. Acad. Sci. U.S.A.">
        <title>Recent African origin of modern humans revealed by complete sequences of hominoid mitochondrial DNAs.</title>
        <authorList>
            <person name="Horai S."/>
            <person name="Hayasaka K."/>
            <person name="Kondo R."/>
            <person name="Tsugane K."/>
            <person name="Takahata N."/>
        </authorList>
    </citation>
    <scope>NUCLEOTIDE SEQUENCE [GENOMIC DNA]</scope>
</reference>
<reference key="2">
    <citation type="journal article" date="1982" name="J. Mol. Evol.">
        <title>Mitochondrial DNA sequences of primates: tempo and mode of evolution.</title>
        <authorList>
            <person name="Brown W.M."/>
            <person name="Prager E.M."/>
            <person name="Wang A."/>
            <person name="Wilson A.C."/>
        </authorList>
    </citation>
    <scope>NUCLEOTIDE SEQUENCE [GENOMIC DNA] OF 1-79</scope>
</reference>
<proteinExistence type="inferred from homology"/>